<proteinExistence type="evidence at protein level"/>
<protein>
    <recommendedName>
        <fullName>Protein YeeW</fullName>
    </recommendedName>
</protein>
<name>YEEW_ECOLI</name>
<feature type="chain" id="PRO_0000169118" description="Protein YeeW">
    <location>
        <begin position="1"/>
        <end position="64"/>
    </location>
</feature>
<organism>
    <name type="scientific">Escherichia coli (strain K12)</name>
    <dbReference type="NCBI Taxonomy" id="83333"/>
    <lineage>
        <taxon>Bacteria</taxon>
        <taxon>Pseudomonadati</taxon>
        <taxon>Pseudomonadota</taxon>
        <taxon>Gammaproteobacteria</taxon>
        <taxon>Enterobacterales</taxon>
        <taxon>Enterobacteriaceae</taxon>
        <taxon>Escherichia</taxon>
    </lineage>
</organism>
<keyword id="KW-1185">Reference proteome</keyword>
<gene>
    <name type="primary">yeeW</name>
    <name type="ordered locus">b2006</name>
    <name type="ordered locus">JW1988</name>
</gene>
<sequence length="64" mass="6959">MMTLEADSVNVQALDMGHIVVDIDGVNITELINKAAENGYSLRVVDDRDSTETPATYASPHQLL</sequence>
<comment type="interaction">
    <interactant intactId="EBI-9146863">
        <id>P64526</id>
    </interactant>
    <interactant intactId="EBI-549153">
        <id>P28630</id>
        <label>holA</label>
    </interactant>
    <organismsDiffer>false</organismsDiffer>
    <experiments>2</experiments>
</comment>
<comment type="miscellaneous">
    <text evidence="1">Encoded by the CP4-44 prophage.</text>
</comment>
<comment type="miscellaneous">
    <text evidence="1">Might be missing up to 100 C-terminal residues compared to orthologs.</text>
</comment>
<reference key="1">
    <citation type="journal article" date="1997" name="Science">
        <title>The complete genome sequence of Escherichia coli K-12.</title>
        <authorList>
            <person name="Blattner F.R."/>
            <person name="Plunkett G. III"/>
            <person name="Bloch C.A."/>
            <person name="Perna N.T."/>
            <person name="Burland V."/>
            <person name="Riley M."/>
            <person name="Collado-Vides J."/>
            <person name="Glasner J.D."/>
            <person name="Rode C.K."/>
            <person name="Mayhew G.F."/>
            <person name="Gregor J."/>
            <person name="Davis N.W."/>
            <person name="Kirkpatrick H.A."/>
            <person name="Goeden M.A."/>
            <person name="Rose D.J."/>
            <person name="Mau B."/>
            <person name="Shao Y."/>
        </authorList>
    </citation>
    <scope>NUCLEOTIDE SEQUENCE [LARGE SCALE GENOMIC DNA]</scope>
    <source>
        <strain>K12 / MG1655 / ATCC 47076</strain>
    </source>
</reference>
<reference key="2">
    <citation type="journal article" date="2006" name="Mol. Syst. Biol.">
        <title>Highly accurate genome sequences of Escherichia coli K-12 strains MG1655 and W3110.</title>
        <authorList>
            <person name="Hayashi K."/>
            <person name="Morooka N."/>
            <person name="Yamamoto Y."/>
            <person name="Fujita K."/>
            <person name="Isono K."/>
            <person name="Choi S."/>
            <person name="Ohtsubo E."/>
            <person name="Baba T."/>
            <person name="Wanner B.L."/>
            <person name="Mori H."/>
            <person name="Horiuchi T."/>
        </authorList>
    </citation>
    <scope>NUCLEOTIDE SEQUENCE [LARGE SCALE GENOMIC DNA]</scope>
    <source>
        <strain>K12 / W3110 / ATCC 27325 / DSM 5911</strain>
    </source>
</reference>
<evidence type="ECO:0000305" key="1"/>
<dbReference type="EMBL" id="U00096">
    <property type="protein sequence ID" value="AYC08225.1"/>
    <property type="molecule type" value="Genomic_DNA"/>
</dbReference>
<dbReference type="EMBL" id="AP009048">
    <property type="protein sequence ID" value="BAE76566.1"/>
    <property type="molecule type" value="Genomic_DNA"/>
</dbReference>
<dbReference type="PIR" id="E64965">
    <property type="entry name" value="E64965"/>
</dbReference>
<dbReference type="RefSeq" id="WP_000988600.1">
    <property type="nucleotide sequence ID" value="NZ_SSUV01000054.1"/>
</dbReference>
<dbReference type="BioGRID" id="4259165">
    <property type="interactions" value="20"/>
</dbReference>
<dbReference type="FunCoup" id="P64526">
    <property type="interactions" value="78"/>
</dbReference>
<dbReference type="IntAct" id="P64526">
    <property type="interactions" value="5"/>
</dbReference>
<dbReference type="EnsemblBacteria" id="AYC08225">
    <property type="protein sequence ID" value="AYC08225"/>
    <property type="gene ID" value="b2006"/>
</dbReference>
<dbReference type="KEGG" id="ecj:JW1988"/>
<dbReference type="KEGG" id="ecoc:C3026_11310"/>
<dbReference type="PATRIC" id="fig|1411691.4.peg.247"/>
<dbReference type="EchoBASE" id="EB3171"/>
<dbReference type="HOGENOM" id="CLU_114884_2_0_6"/>
<dbReference type="InParanoid" id="P64526"/>
<dbReference type="OrthoDB" id="6636466at2"/>
<dbReference type="BioCyc" id="EcoCyc:G7086-MONOMER"/>
<dbReference type="PRO" id="PR:P64526"/>
<dbReference type="Proteomes" id="UP000000625">
    <property type="component" value="Chromosome"/>
</dbReference>
<dbReference type="InterPro" id="IPR046025">
    <property type="entry name" value="DUF5983"/>
</dbReference>
<dbReference type="Pfam" id="PF19419">
    <property type="entry name" value="DUF5983"/>
    <property type="match status" value="1"/>
</dbReference>
<accession>P64526</accession>
<accession>A0A385XJK2</accession>
<accession>P76366</accession>
<accession>Q2MAZ0</accession>
<accession>Q8X8U5</accession>